<protein>
    <recommendedName>
        <fullName evidence="1">Nucleoprotein</fullName>
    </recommendedName>
    <alternativeName>
        <fullName evidence="1">Nucleocapsid protein</fullName>
        <shortName evidence="1">Protein N</shortName>
    </alternativeName>
</protein>
<organism>
    <name type="scientific">Influenza A virus (strain A/Shanghai/11/1987 H3N2)</name>
    <dbReference type="NCBI Taxonomy" id="383568"/>
    <lineage>
        <taxon>Viruses</taxon>
        <taxon>Riboviria</taxon>
        <taxon>Orthornavirae</taxon>
        <taxon>Negarnaviricota</taxon>
        <taxon>Polyploviricotina</taxon>
        <taxon>Insthoviricetes</taxon>
        <taxon>Articulavirales</taxon>
        <taxon>Orthomyxoviridae</taxon>
        <taxon>Alphainfluenzavirus</taxon>
        <taxon>Alphainfluenzavirus influenzae</taxon>
        <taxon>Influenza A virus</taxon>
    </lineage>
</organism>
<keyword id="KW-0167">Capsid protein</keyword>
<keyword id="KW-1139">Helical capsid protein</keyword>
<keyword id="KW-1048">Host nucleus</keyword>
<keyword id="KW-0945">Host-virus interaction</keyword>
<keyword id="KW-0687">Ribonucleoprotein</keyword>
<keyword id="KW-0694">RNA-binding</keyword>
<keyword id="KW-0543">Viral nucleoprotein</keyword>
<keyword id="KW-1163">Viral penetration into host nucleus</keyword>
<keyword id="KW-0946">Virion</keyword>
<keyword id="KW-1160">Virus entry into host cell</keyword>
<dbReference type="EMBL" id="L07367">
    <property type="protein sequence ID" value="AAA51515.1"/>
    <property type="molecule type" value="Genomic_RNA"/>
</dbReference>
<dbReference type="SMR" id="Q07550"/>
<dbReference type="Proteomes" id="UP000128146">
    <property type="component" value="Genome"/>
</dbReference>
<dbReference type="GO" id="GO:0019029">
    <property type="term" value="C:helical viral capsid"/>
    <property type="evidence" value="ECO:0007669"/>
    <property type="project" value="UniProtKB-UniRule"/>
</dbReference>
<dbReference type="GO" id="GO:0043657">
    <property type="term" value="C:host cell"/>
    <property type="evidence" value="ECO:0007669"/>
    <property type="project" value="GOC"/>
</dbReference>
<dbReference type="GO" id="GO:0042025">
    <property type="term" value="C:host cell nucleus"/>
    <property type="evidence" value="ECO:0007669"/>
    <property type="project" value="UniProtKB-SubCell"/>
</dbReference>
<dbReference type="GO" id="GO:1990904">
    <property type="term" value="C:ribonucleoprotein complex"/>
    <property type="evidence" value="ECO:0007669"/>
    <property type="project" value="UniProtKB-KW"/>
</dbReference>
<dbReference type="GO" id="GO:0019013">
    <property type="term" value="C:viral nucleocapsid"/>
    <property type="evidence" value="ECO:0007669"/>
    <property type="project" value="UniProtKB-UniRule"/>
</dbReference>
<dbReference type="GO" id="GO:0003723">
    <property type="term" value="F:RNA binding"/>
    <property type="evidence" value="ECO:0007669"/>
    <property type="project" value="UniProtKB-UniRule"/>
</dbReference>
<dbReference type="GO" id="GO:0005198">
    <property type="term" value="F:structural molecule activity"/>
    <property type="evidence" value="ECO:0007669"/>
    <property type="project" value="UniProtKB-UniRule"/>
</dbReference>
<dbReference type="GO" id="GO:0046718">
    <property type="term" value="P:symbiont entry into host cell"/>
    <property type="evidence" value="ECO:0007669"/>
    <property type="project" value="UniProtKB-KW"/>
</dbReference>
<dbReference type="GO" id="GO:0075732">
    <property type="term" value="P:viral penetration into host nucleus"/>
    <property type="evidence" value="ECO:0007669"/>
    <property type="project" value="UniProtKB-UniRule"/>
</dbReference>
<dbReference type="HAMAP" id="MF_04070">
    <property type="entry name" value="INFV_NCAP"/>
    <property type="match status" value="1"/>
</dbReference>
<dbReference type="InterPro" id="IPR002141">
    <property type="entry name" value="Flu_NP"/>
</dbReference>
<dbReference type="Pfam" id="PF00506">
    <property type="entry name" value="Flu_NP"/>
    <property type="match status" value="1"/>
</dbReference>
<dbReference type="SUPFAM" id="SSF161003">
    <property type="entry name" value="flu NP-like"/>
    <property type="match status" value="1"/>
</dbReference>
<proteinExistence type="inferred from homology"/>
<gene>
    <name evidence="1" type="primary">NP</name>
</gene>
<sequence>MASQGTKRSYEQMETDGERQNATEIRASVGKMIDGIGRFYIQMCTELKLSDYEGRLIQNSLTVERMVLSAFDERRNRYLEEHPSAGKDPKKTGGPIYKRVGGRWMRELVLYDKEEIRRIWRQANNGDDATRGLTHMMIWHSNLNDTTYQRTRALVRTGMDPRMCSLMQGSTLPRRSGAAGAAVKGIGTMVMELIRMIKRGINDRNFWRGENGRKTRSAYERMCNILKGKFQTAAQRAMMDQVRESRNPGNAEIEDLIFSARSALILRGSVAHKSCLPACVYGPAVSSGYDFEKEGYSLVGIDPFKLLQNSQVYSLIRPNENPAHKSQLVWMACHSAAFEDLRLLSFIRGTKVSPRGKLSTRGVQIASNENMDTMESSTLELRSRYWAIRTRSGGNTNQQRASAGQISVQPTFSVQRNLPFEKSTVMAAFTGNTEGRTSDMRAEIIRMMEGAKPEEVSFRGRGVFELSDEKATNPIVPSFDMSNEGSYFFGDNAEEYDN</sequence>
<comment type="function">
    <text evidence="1">Encapsidates the negative strand viral RNA, protecting it from nucleases. The encapsidated genomic RNA is termed the ribonucleoprotein (RNP) and serves as template for transcription and replication. The RNP needs to be localized in the host nucleus to start an infectious cycle, but is too large to diffuse through the nuclear pore complex. NP comprises at least 2 nuclear localization signals that are responsible for the active RNP import into the nucleus through cellular importin alpha/beta pathway. Later in the infection, nclear export of RNPs are mediated through viral proteins NEP interacting with M1 which binds nucleoproteins. It is possible that nucleoprotein binds directly host exportin-1/XPO1 and plays an active role in RNPs nuclear export. M1 interaction with RNP seems to hide nucleoprotein's nuclear localization signals. Soon after a virion infects a new cell, M1 dissociates from the RNP under acidification of the virion driven by M2 protein. Dissociation of M1 from RNP unmasks nucleoprotein's nuclear localization signals, targeting the RNP to the nucleus.</text>
</comment>
<comment type="subunit">
    <text evidence="1">Homomultimerizes to form the nucleocapsid. May bind host exportin-1/XPO1. Binds to viral genomic RNA. Protein-RNA contacts are mediated by a combination of electrostatic interactions between positively charged residues and the phosphate backbone and planar interactions between aromatic side chains and bases.</text>
</comment>
<comment type="subcellular location">
    <subcellularLocation>
        <location evidence="1">Virion</location>
    </subcellularLocation>
    <subcellularLocation>
        <location evidence="1">Host nucleus</location>
    </subcellularLocation>
</comment>
<comment type="PTM">
    <text evidence="1">Late in virus-infected cells, may be cleaved from a 56-kDa protein to a 53-kDa protein by a cellular caspase. This cleavage might be a marker for the onset of apoptosis in infected cells or have a specific function in virus host interaction.</text>
</comment>
<comment type="similarity">
    <text evidence="1">Belongs to the influenza viruses nucleoprotein family.</text>
</comment>
<evidence type="ECO:0000255" key="1">
    <source>
        <dbReference type="HAMAP-Rule" id="MF_04070"/>
    </source>
</evidence>
<evidence type="ECO:0000256" key="2">
    <source>
        <dbReference type="SAM" id="MobiDB-lite"/>
    </source>
</evidence>
<name>NCAP_I87A0</name>
<accession>Q07550</accession>
<reference key="1">
    <citation type="journal article" date="1993" name="J. Virol.">
        <title>Analysis of the evolution and variation of the human influenza A virus nucleoprotein gene from 1933 to 1990.</title>
        <authorList>
            <person name="Shu L.L."/>
            <person name="Bean W.J."/>
            <person name="Webster R.G."/>
        </authorList>
    </citation>
    <scope>NUCLEOTIDE SEQUENCE [GENOMIC RNA]</scope>
</reference>
<feature type="chain" id="PRO_0000079095" description="Nucleoprotein">
    <location>
        <begin position="1"/>
        <end position="498"/>
    </location>
</feature>
<feature type="region of interest" description="Disordered" evidence="2">
    <location>
        <begin position="1"/>
        <end position="21"/>
    </location>
</feature>
<feature type="short sequence motif" description="Unconventional nuclear localization signal" evidence="1">
    <location>
        <begin position="1"/>
        <end position="18"/>
    </location>
</feature>
<feature type="short sequence motif" description="Bipartite nuclear localization signal" evidence="1">
    <location>
        <begin position="198"/>
        <end position="216"/>
    </location>
</feature>
<feature type="compositionally biased region" description="Basic and acidic residues" evidence="2">
    <location>
        <begin position="8"/>
        <end position="21"/>
    </location>
</feature>
<organismHost>
    <name type="scientific">Aves</name>
    <dbReference type="NCBI Taxonomy" id="8782"/>
</organismHost>
<organismHost>
    <name type="scientific">Cetacea</name>
    <name type="common">whales</name>
    <dbReference type="NCBI Taxonomy" id="9721"/>
</organismHost>
<organismHost>
    <name type="scientific">Homo sapiens</name>
    <name type="common">Human</name>
    <dbReference type="NCBI Taxonomy" id="9606"/>
</organismHost>
<organismHost>
    <name type="scientific">Phocidae</name>
    <name type="common">true seals</name>
    <dbReference type="NCBI Taxonomy" id="9709"/>
</organismHost>
<organismHost>
    <name type="scientific">Sus scrofa</name>
    <name type="common">Pig</name>
    <dbReference type="NCBI Taxonomy" id="9823"/>
</organismHost>